<evidence type="ECO:0000255" key="1">
    <source>
        <dbReference type="HAMAP-Rule" id="MF_00206"/>
    </source>
</evidence>
<evidence type="ECO:0000255" key="2">
    <source>
        <dbReference type="PROSITE-ProRule" id="PRU01266"/>
    </source>
</evidence>
<proteinExistence type="inferred from homology"/>
<gene>
    <name evidence="1" type="primary">lipA</name>
    <name type="ordered locus">Shal_3241</name>
</gene>
<accession>B0TR57</accession>
<keyword id="KW-0004">4Fe-4S</keyword>
<keyword id="KW-0963">Cytoplasm</keyword>
<keyword id="KW-0408">Iron</keyword>
<keyword id="KW-0411">Iron-sulfur</keyword>
<keyword id="KW-0479">Metal-binding</keyword>
<keyword id="KW-0949">S-adenosyl-L-methionine</keyword>
<keyword id="KW-0808">Transferase</keyword>
<dbReference type="EC" id="2.8.1.8" evidence="1"/>
<dbReference type="EMBL" id="CP000931">
    <property type="protein sequence ID" value="ABZ77788.1"/>
    <property type="molecule type" value="Genomic_DNA"/>
</dbReference>
<dbReference type="RefSeq" id="WP_012278310.1">
    <property type="nucleotide sequence ID" value="NC_010334.1"/>
</dbReference>
<dbReference type="SMR" id="B0TR57"/>
<dbReference type="STRING" id="458817.Shal_3241"/>
<dbReference type="KEGG" id="shl:Shal_3241"/>
<dbReference type="eggNOG" id="COG0320">
    <property type="taxonomic scope" value="Bacteria"/>
</dbReference>
<dbReference type="HOGENOM" id="CLU_033144_2_1_6"/>
<dbReference type="OrthoDB" id="9787898at2"/>
<dbReference type="UniPathway" id="UPA00538">
    <property type="reaction ID" value="UER00593"/>
</dbReference>
<dbReference type="Proteomes" id="UP000001317">
    <property type="component" value="Chromosome"/>
</dbReference>
<dbReference type="GO" id="GO:0005737">
    <property type="term" value="C:cytoplasm"/>
    <property type="evidence" value="ECO:0007669"/>
    <property type="project" value="UniProtKB-SubCell"/>
</dbReference>
<dbReference type="GO" id="GO:0051539">
    <property type="term" value="F:4 iron, 4 sulfur cluster binding"/>
    <property type="evidence" value="ECO:0007669"/>
    <property type="project" value="UniProtKB-UniRule"/>
</dbReference>
<dbReference type="GO" id="GO:0016992">
    <property type="term" value="F:lipoate synthase activity"/>
    <property type="evidence" value="ECO:0007669"/>
    <property type="project" value="UniProtKB-UniRule"/>
</dbReference>
<dbReference type="GO" id="GO:0046872">
    <property type="term" value="F:metal ion binding"/>
    <property type="evidence" value="ECO:0007669"/>
    <property type="project" value="UniProtKB-KW"/>
</dbReference>
<dbReference type="CDD" id="cd01335">
    <property type="entry name" value="Radical_SAM"/>
    <property type="match status" value="1"/>
</dbReference>
<dbReference type="FunFam" id="3.20.20.70:FF:000023">
    <property type="entry name" value="Lipoyl synthase"/>
    <property type="match status" value="1"/>
</dbReference>
<dbReference type="Gene3D" id="3.20.20.70">
    <property type="entry name" value="Aldolase class I"/>
    <property type="match status" value="1"/>
</dbReference>
<dbReference type="HAMAP" id="MF_00206">
    <property type="entry name" value="Lipoyl_synth"/>
    <property type="match status" value="1"/>
</dbReference>
<dbReference type="InterPro" id="IPR013785">
    <property type="entry name" value="Aldolase_TIM"/>
</dbReference>
<dbReference type="InterPro" id="IPR006638">
    <property type="entry name" value="Elp3/MiaA/NifB-like_rSAM"/>
</dbReference>
<dbReference type="InterPro" id="IPR031691">
    <property type="entry name" value="LIAS_N"/>
</dbReference>
<dbReference type="InterPro" id="IPR003698">
    <property type="entry name" value="Lipoyl_synth"/>
</dbReference>
<dbReference type="InterPro" id="IPR007197">
    <property type="entry name" value="rSAM"/>
</dbReference>
<dbReference type="NCBIfam" id="TIGR00510">
    <property type="entry name" value="lipA"/>
    <property type="match status" value="1"/>
</dbReference>
<dbReference type="NCBIfam" id="NF004019">
    <property type="entry name" value="PRK05481.1"/>
    <property type="match status" value="1"/>
</dbReference>
<dbReference type="NCBIfam" id="NF009544">
    <property type="entry name" value="PRK12928.1"/>
    <property type="match status" value="1"/>
</dbReference>
<dbReference type="PANTHER" id="PTHR10949">
    <property type="entry name" value="LIPOYL SYNTHASE"/>
    <property type="match status" value="1"/>
</dbReference>
<dbReference type="PANTHER" id="PTHR10949:SF0">
    <property type="entry name" value="LIPOYL SYNTHASE, MITOCHONDRIAL"/>
    <property type="match status" value="1"/>
</dbReference>
<dbReference type="Pfam" id="PF16881">
    <property type="entry name" value="LIAS_N"/>
    <property type="match status" value="1"/>
</dbReference>
<dbReference type="Pfam" id="PF04055">
    <property type="entry name" value="Radical_SAM"/>
    <property type="match status" value="1"/>
</dbReference>
<dbReference type="PIRSF" id="PIRSF005963">
    <property type="entry name" value="Lipoyl_synth"/>
    <property type="match status" value="1"/>
</dbReference>
<dbReference type="SFLD" id="SFLDF00271">
    <property type="entry name" value="lipoyl_synthase"/>
    <property type="match status" value="1"/>
</dbReference>
<dbReference type="SFLD" id="SFLDS00029">
    <property type="entry name" value="Radical_SAM"/>
    <property type="match status" value="1"/>
</dbReference>
<dbReference type="SMART" id="SM00729">
    <property type="entry name" value="Elp3"/>
    <property type="match status" value="1"/>
</dbReference>
<dbReference type="SUPFAM" id="SSF102114">
    <property type="entry name" value="Radical SAM enzymes"/>
    <property type="match status" value="1"/>
</dbReference>
<dbReference type="PROSITE" id="PS51918">
    <property type="entry name" value="RADICAL_SAM"/>
    <property type="match status" value="1"/>
</dbReference>
<feature type="chain" id="PRO_1000077968" description="Lipoyl synthase">
    <location>
        <begin position="1"/>
        <end position="321"/>
    </location>
</feature>
<feature type="domain" description="Radical SAM core" evidence="2">
    <location>
        <begin position="80"/>
        <end position="297"/>
    </location>
</feature>
<feature type="binding site" evidence="1">
    <location>
        <position position="68"/>
    </location>
    <ligand>
        <name>[4Fe-4S] cluster</name>
        <dbReference type="ChEBI" id="CHEBI:49883"/>
        <label>1</label>
    </ligand>
</feature>
<feature type="binding site" evidence="1">
    <location>
        <position position="73"/>
    </location>
    <ligand>
        <name>[4Fe-4S] cluster</name>
        <dbReference type="ChEBI" id="CHEBI:49883"/>
        <label>1</label>
    </ligand>
</feature>
<feature type="binding site" evidence="1">
    <location>
        <position position="79"/>
    </location>
    <ligand>
        <name>[4Fe-4S] cluster</name>
        <dbReference type="ChEBI" id="CHEBI:49883"/>
        <label>1</label>
    </ligand>
</feature>
<feature type="binding site" evidence="1">
    <location>
        <position position="94"/>
    </location>
    <ligand>
        <name>[4Fe-4S] cluster</name>
        <dbReference type="ChEBI" id="CHEBI:49883"/>
        <label>2</label>
        <note>4Fe-4S-S-AdoMet</note>
    </ligand>
</feature>
<feature type="binding site" evidence="1">
    <location>
        <position position="98"/>
    </location>
    <ligand>
        <name>[4Fe-4S] cluster</name>
        <dbReference type="ChEBI" id="CHEBI:49883"/>
        <label>2</label>
        <note>4Fe-4S-S-AdoMet</note>
    </ligand>
</feature>
<feature type="binding site" evidence="1">
    <location>
        <position position="101"/>
    </location>
    <ligand>
        <name>[4Fe-4S] cluster</name>
        <dbReference type="ChEBI" id="CHEBI:49883"/>
        <label>2</label>
        <note>4Fe-4S-S-AdoMet</note>
    </ligand>
</feature>
<feature type="binding site" evidence="1">
    <location>
        <position position="308"/>
    </location>
    <ligand>
        <name>[4Fe-4S] cluster</name>
        <dbReference type="ChEBI" id="CHEBI:49883"/>
        <label>1</label>
    </ligand>
</feature>
<organism>
    <name type="scientific">Shewanella halifaxensis (strain HAW-EB4)</name>
    <dbReference type="NCBI Taxonomy" id="458817"/>
    <lineage>
        <taxon>Bacteria</taxon>
        <taxon>Pseudomonadati</taxon>
        <taxon>Pseudomonadota</taxon>
        <taxon>Gammaproteobacteria</taxon>
        <taxon>Alteromonadales</taxon>
        <taxon>Shewanellaceae</taxon>
        <taxon>Shewanella</taxon>
    </lineage>
</organism>
<protein>
    <recommendedName>
        <fullName evidence="1">Lipoyl synthase</fullName>
        <ecNumber evidence="1">2.8.1.8</ecNumber>
    </recommendedName>
    <alternativeName>
        <fullName evidence="1">Lip-syn</fullName>
        <shortName evidence="1">LS</shortName>
    </alternativeName>
    <alternativeName>
        <fullName evidence="1">Lipoate synthase</fullName>
    </alternativeName>
    <alternativeName>
        <fullName evidence="1">Lipoic acid synthase</fullName>
    </alternativeName>
    <alternativeName>
        <fullName evidence="1">Sulfur insertion protein LipA</fullName>
    </alternativeName>
</protein>
<comment type="function">
    <text evidence="1">Catalyzes the radical-mediated insertion of two sulfur atoms into the C-6 and C-8 positions of the octanoyl moiety bound to the lipoyl domains of lipoate-dependent enzymes, thereby converting the octanoylated domains into lipoylated derivatives.</text>
</comment>
<comment type="catalytic activity">
    <reaction evidence="1">
        <text>[[Fe-S] cluster scaffold protein carrying a second [4Fe-4S](2+) cluster] + N(6)-octanoyl-L-lysyl-[protein] + 2 oxidized [2Fe-2S]-[ferredoxin] + 2 S-adenosyl-L-methionine + 4 H(+) = [[Fe-S] cluster scaffold protein] + N(6)-[(R)-dihydrolipoyl]-L-lysyl-[protein] + 4 Fe(3+) + 2 hydrogen sulfide + 2 5'-deoxyadenosine + 2 L-methionine + 2 reduced [2Fe-2S]-[ferredoxin]</text>
        <dbReference type="Rhea" id="RHEA:16585"/>
        <dbReference type="Rhea" id="RHEA-COMP:9928"/>
        <dbReference type="Rhea" id="RHEA-COMP:10000"/>
        <dbReference type="Rhea" id="RHEA-COMP:10001"/>
        <dbReference type="Rhea" id="RHEA-COMP:10475"/>
        <dbReference type="Rhea" id="RHEA-COMP:14568"/>
        <dbReference type="Rhea" id="RHEA-COMP:14569"/>
        <dbReference type="ChEBI" id="CHEBI:15378"/>
        <dbReference type="ChEBI" id="CHEBI:17319"/>
        <dbReference type="ChEBI" id="CHEBI:29034"/>
        <dbReference type="ChEBI" id="CHEBI:29919"/>
        <dbReference type="ChEBI" id="CHEBI:33722"/>
        <dbReference type="ChEBI" id="CHEBI:33737"/>
        <dbReference type="ChEBI" id="CHEBI:33738"/>
        <dbReference type="ChEBI" id="CHEBI:57844"/>
        <dbReference type="ChEBI" id="CHEBI:59789"/>
        <dbReference type="ChEBI" id="CHEBI:78809"/>
        <dbReference type="ChEBI" id="CHEBI:83100"/>
        <dbReference type="EC" id="2.8.1.8"/>
    </reaction>
</comment>
<comment type="cofactor">
    <cofactor evidence="1">
        <name>[4Fe-4S] cluster</name>
        <dbReference type="ChEBI" id="CHEBI:49883"/>
    </cofactor>
    <text evidence="1">Binds 2 [4Fe-4S] clusters per subunit. One cluster is coordinated with 3 cysteines and an exchangeable S-adenosyl-L-methionine.</text>
</comment>
<comment type="pathway">
    <text evidence="1">Protein modification; protein lipoylation via endogenous pathway; protein N(6)-(lipoyl)lysine from octanoyl-[acyl-carrier-protein]: step 2/2.</text>
</comment>
<comment type="subcellular location">
    <subcellularLocation>
        <location evidence="1">Cytoplasm</location>
    </subcellularLocation>
</comment>
<comment type="similarity">
    <text evidence="1">Belongs to the radical SAM superfamily. Lipoyl synthase family.</text>
</comment>
<reference key="1">
    <citation type="submission" date="2008-01" db="EMBL/GenBank/DDBJ databases">
        <title>Complete sequence of Shewanella halifaxensis HAW-EB4.</title>
        <authorList>
            <consortium name="US DOE Joint Genome Institute"/>
            <person name="Copeland A."/>
            <person name="Lucas S."/>
            <person name="Lapidus A."/>
            <person name="Glavina del Rio T."/>
            <person name="Dalin E."/>
            <person name="Tice H."/>
            <person name="Bruce D."/>
            <person name="Goodwin L."/>
            <person name="Pitluck S."/>
            <person name="Sims D."/>
            <person name="Brettin T."/>
            <person name="Detter J.C."/>
            <person name="Han C."/>
            <person name="Kuske C.R."/>
            <person name="Schmutz J."/>
            <person name="Larimer F."/>
            <person name="Land M."/>
            <person name="Hauser L."/>
            <person name="Kyrpides N."/>
            <person name="Kim E."/>
            <person name="Zhao J.-S."/>
            <person name="Richardson P."/>
        </authorList>
    </citation>
    <scope>NUCLEOTIDE SEQUENCE [LARGE SCALE GENOMIC DNA]</scope>
    <source>
        <strain>HAW-EB4</strain>
    </source>
</reference>
<name>LIPA_SHEHH</name>
<sequence>MNRPERLQPGVKLRDAEKVSRIPVKVVPSERETMLRKPDWLRVKLPASNQRITDIKQALRKNGLHSVCEEASCPNLSECFNHGTATFMILGAICTRRCPFCDVAHGRPLKPDAEEPKKLAQTIKDMKLKYVVITSVDRDDLRDGGAQHFADCIREIRLLNPEIKIETLVPDFRGRIDAALDILATEPPDVFNHNLETAPMHYRKARPGANYQWSLDLLKKFKERHPDIPTKSGLMMGLGESNEEIAQVLYDLRAHNVEMLTLGQYLQPSKFHLAVERYVSPAEFDELKELAESIGFTHAACGPLVRSSYHADLQAQGKEVR</sequence>